<evidence type="ECO:0000255" key="1">
    <source>
        <dbReference type="HAMAP-Rule" id="MF_01302"/>
    </source>
</evidence>
<evidence type="ECO:0000305" key="2"/>
<sequence length="132" mass="14882">MVMTDPIADMLTRIRNANMVRHEKLEVPASKIKKEIAELLKREGFIRDVEYIEDNKQGILRIFLKYGANNERVITGLKRISKPGLRVYAKADEVPRVLNGLGIALVSTSKGVMTDKDARQLQTGGEVVAYVW</sequence>
<organism>
    <name type="scientific">Bacillus cereus (strain B4264)</name>
    <dbReference type="NCBI Taxonomy" id="405532"/>
    <lineage>
        <taxon>Bacteria</taxon>
        <taxon>Bacillati</taxon>
        <taxon>Bacillota</taxon>
        <taxon>Bacilli</taxon>
        <taxon>Bacillales</taxon>
        <taxon>Bacillaceae</taxon>
        <taxon>Bacillus</taxon>
        <taxon>Bacillus cereus group</taxon>
    </lineage>
</organism>
<dbReference type="EMBL" id="CP001176">
    <property type="protein sequence ID" value="ACK63348.1"/>
    <property type="molecule type" value="Genomic_DNA"/>
</dbReference>
<dbReference type="RefSeq" id="WP_000245511.1">
    <property type="nucleotide sequence ID" value="NZ_VEHB01000017.1"/>
</dbReference>
<dbReference type="SMR" id="B7HJ62"/>
<dbReference type="GeneID" id="93010929"/>
<dbReference type="KEGG" id="bcb:BCB4264_A0145"/>
<dbReference type="HOGENOM" id="CLU_098428_0_2_9"/>
<dbReference type="Proteomes" id="UP000007096">
    <property type="component" value="Chromosome"/>
</dbReference>
<dbReference type="GO" id="GO:1990904">
    <property type="term" value="C:ribonucleoprotein complex"/>
    <property type="evidence" value="ECO:0007669"/>
    <property type="project" value="UniProtKB-KW"/>
</dbReference>
<dbReference type="GO" id="GO:0005840">
    <property type="term" value="C:ribosome"/>
    <property type="evidence" value="ECO:0007669"/>
    <property type="project" value="UniProtKB-KW"/>
</dbReference>
<dbReference type="GO" id="GO:0019843">
    <property type="term" value="F:rRNA binding"/>
    <property type="evidence" value="ECO:0007669"/>
    <property type="project" value="UniProtKB-UniRule"/>
</dbReference>
<dbReference type="GO" id="GO:0003735">
    <property type="term" value="F:structural constituent of ribosome"/>
    <property type="evidence" value="ECO:0007669"/>
    <property type="project" value="InterPro"/>
</dbReference>
<dbReference type="GO" id="GO:0006412">
    <property type="term" value="P:translation"/>
    <property type="evidence" value="ECO:0007669"/>
    <property type="project" value="UniProtKB-UniRule"/>
</dbReference>
<dbReference type="FunFam" id="3.30.1370.30:FF:000002">
    <property type="entry name" value="30S ribosomal protein S8"/>
    <property type="match status" value="1"/>
</dbReference>
<dbReference type="FunFam" id="3.30.1490.10:FF:000001">
    <property type="entry name" value="30S ribosomal protein S8"/>
    <property type="match status" value="1"/>
</dbReference>
<dbReference type="Gene3D" id="3.30.1370.30">
    <property type="match status" value="1"/>
</dbReference>
<dbReference type="Gene3D" id="3.30.1490.10">
    <property type="match status" value="1"/>
</dbReference>
<dbReference type="HAMAP" id="MF_01302_B">
    <property type="entry name" value="Ribosomal_uS8_B"/>
    <property type="match status" value="1"/>
</dbReference>
<dbReference type="InterPro" id="IPR000630">
    <property type="entry name" value="Ribosomal_uS8"/>
</dbReference>
<dbReference type="InterPro" id="IPR047863">
    <property type="entry name" value="Ribosomal_uS8_CS"/>
</dbReference>
<dbReference type="InterPro" id="IPR035987">
    <property type="entry name" value="Ribosomal_uS8_sf"/>
</dbReference>
<dbReference type="NCBIfam" id="NF001109">
    <property type="entry name" value="PRK00136.1"/>
    <property type="match status" value="1"/>
</dbReference>
<dbReference type="PANTHER" id="PTHR11758">
    <property type="entry name" value="40S RIBOSOMAL PROTEIN S15A"/>
    <property type="match status" value="1"/>
</dbReference>
<dbReference type="Pfam" id="PF00410">
    <property type="entry name" value="Ribosomal_S8"/>
    <property type="match status" value="1"/>
</dbReference>
<dbReference type="SUPFAM" id="SSF56047">
    <property type="entry name" value="Ribosomal protein S8"/>
    <property type="match status" value="1"/>
</dbReference>
<dbReference type="PROSITE" id="PS00053">
    <property type="entry name" value="RIBOSOMAL_S8"/>
    <property type="match status" value="1"/>
</dbReference>
<keyword id="KW-0687">Ribonucleoprotein</keyword>
<keyword id="KW-0689">Ribosomal protein</keyword>
<keyword id="KW-0694">RNA-binding</keyword>
<keyword id="KW-0699">rRNA-binding</keyword>
<feature type="chain" id="PRO_1000140511" description="Small ribosomal subunit protein uS8">
    <location>
        <begin position="1"/>
        <end position="132"/>
    </location>
</feature>
<protein>
    <recommendedName>
        <fullName evidence="1">Small ribosomal subunit protein uS8</fullName>
    </recommendedName>
    <alternativeName>
        <fullName evidence="2">30S ribosomal protein S8</fullName>
    </alternativeName>
</protein>
<accession>B7HJ62</accession>
<name>RS8_BACC4</name>
<gene>
    <name evidence="1" type="primary">rpsH</name>
    <name type="ordered locus">BCB4264_A0145</name>
</gene>
<proteinExistence type="inferred from homology"/>
<comment type="function">
    <text evidence="1">One of the primary rRNA binding proteins, it binds directly to 16S rRNA central domain where it helps coordinate assembly of the platform of the 30S subunit.</text>
</comment>
<comment type="subunit">
    <text evidence="1">Part of the 30S ribosomal subunit. Contacts proteins S5 and S12.</text>
</comment>
<comment type="similarity">
    <text evidence="1">Belongs to the universal ribosomal protein uS8 family.</text>
</comment>
<reference key="1">
    <citation type="submission" date="2008-10" db="EMBL/GenBank/DDBJ databases">
        <title>Genome sequence of Bacillus cereus B4264.</title>
        <authorList>
            <person name="Dodson R.J."/>
            <person name="Durkin A.S."/>
            <person name="Rosovitz M.J."/>
            <person name="Rasko D.A."/>
            <person name="Hoffmaster A."/>
            <person name="Ravel J."/>
            <person name="Sutton G."/>
        </authorList>
    </citation>
    <scope>NUCLEOTIDE SEQUENCE [LARGE SCALE GENOMIC DNA]</scope>
    <source>
        <strain>B4264</strain>
    </source>
</reference>